<keyword id="KW-0235">DNA replication</keyword>
<keyword id="KW-0236">DNA replication inhibitor</keyword>
<protein>
    <recommendedName>
        <fullName evidence="2">DnaA regulatory inactivator Hda</fullName>
    </recommendedName>
</protein>
<evidence type="ECO:0000250" key="1"/>
<evidence type="ECO:0000255" key="2">
    <source>
        <dbReference type="HAMAP-Rule" id="MF_01158"/>
    </source>
</evidence>
<reference key="1">
    <citation type="journal article" date="2007" name="PLoS Genet.">
        <title>The complete genome sequence of Yersinia pseudotuberculosis IP31758, the causative agent of Far East scarlet-like fever.</title>
        <authorList>
            <person name="Eppinger M."/>
            <person name="Rosovitz M.J."/>
            <person name="Fricke W.F."/>
            <person name="Rasko D.A."/>
            <person name="Kokorina G."/>
            <person name="Fayolle C."/>
            <person name="Lindler L.E."/>
            <person name="Carniel E."/>
            <person name="Ravel J."/>
        </authorList>
    </citation>
    <scope>NUCLEOTIDE SEQUENCE [LARGE SCALE GENOMIC DNA]</scope>
    <source>
        <strain>IP 31758</strain>
    </source>
</reference>
<organism>
    <name type="scientific">Yersinia pseudotuberculosis serotype O:1b (strain IP 31758)</name>
    <dbReference type="NCBI Taxonomy" id="349747"/>
    <lineage>
        <taxon>Bacteria</taxon>
        <taxon>Pseudomonadati</taxon>
        <taxon>Pseudomonadota</taxon>
        <taxon>Gammaproteobacteria</taxon>
        <taxon>Enterobacterales</taxon>
        <taxon>Yersiniaceae</taxon>
        <taxon>Yersinia</taxon>
    </lineage>
</organism>
<sequence length="239" mass="27143">MLVEVLLNTPAQLSLPLYLPDDETFASFYPGENPSLLAAIQSAVHQPHGSYIYFWSREGGGRSHLLHAACAELSQQGEAVGYVPLDKRAYFIPEVLEGMEQLALVCIDNIECIAGDEQWEMAMFNLYNRIVETGRTRLLITGDRPPRQLNLGLPDLASRLDWGQIYKLQPLSDDEKLQALQLRAKLRGFELPEDVGRFLLKRLDREMRTLFMTLDQLDRASITAQRKLTIPFVKEILSL</sequence>
<feature type="chain" id="PRO_1000065570" description="DnaA regulatory inactivator Hda">
    <location>
        <begin position="1"/>
        <end position="239"/>
    </location>
</feature>
<dbReference type="EMBL" id="CP000720">
    <property type="protein sequence ID" value="ABS48154.1"/>
    <property type="molecule type" value="Genomic_DNA"/>
</dbReference>
<dbReference type="SMR" id="A7FG40"/>
<dbReference type="KEGG" id="ypi:YpsIP31758_1237"/>
<dbReference type="HOGENOM" id="CLU_072265_1_1_6"/>
<dbReference type="Proteomes" id="UP000002412">
    <property type="component" value="Chromosome"/>
</dbReference>
<dbReference type="GO" id="GO:0006270">
    <property type="term" value="P:DNA replication initiation"/>
    <property type="evidence" value="ECO:0007669"/>
    <property type="project" value="TreeGrafter"/>
</dbReference>
<dbReference type="GO" id="GO:0032297">
    <property type="term" value="P:negative regulation of DNA-templated DNA replication initiation"/>
    <property type="evidence" value="ECO:0007669"/>
    <property type="project" value="InterPro"/>
</dbReference>
<dbReference type="FunFam" id="1.10.8.60:FF:000024">
    <property type="entry name" value="DnaA regulatory inactivator Hda"/>
    <property type="match status" value="1"/>
</dbReference>
<dbReference type="FunFam" id="3.40.50.300:FF:000452">
    <property type="entry name" value="DnaA regulatory inactivator Hda"/>
    <property type="match status" value="1"/>
</dbReference>
<dbReference type="Gene3D" id="1.10.8.60">
    <property type="match status" value="1"/>
</dbReference>
<dbReference type="Gene3D" id="3.40.50.300">
    <property type="entry name" value="P-loop containing nucleotide triphosphate hydrolases"/>
    <property type="match status" value="1"/>
</dbReference>
<dbReference type="HAMAP" id="MF_01158">
    <property type="entry name" value="Hda"/>
    <property type="match status" value="1"/>
</dbReference>
<dbReference type="InterPro" id="IPR020591">
    <property type="entry name" value="Chromosome_initiator_DnaA-like"/>
</dbReference>
<dbReference type="InterPro" id="IPR013317">
    <property type="entry name" value="DnaA_dom"/>
</dbReference>
<dbReference type="InterPro" id="IPR017788">
    <property type="entry name" value="Hda"/>
</dbReference>
<dbReference type="InterPro" id="IPR022864">
    <property type="entry name" value="Hda_Enterobact"/>
</dbReference>
<dbReference type="InterPro" id="IPR055199">
    <property type="entry name" value="Hda_lid"/>
</dbReference>
<dbReference type="InterPro" id="IPR027417">
    <property type="entry name" value="P-loop_NTPase"/>
</dbReference>
<dbReference type="NCBIfam" id="TIGR03420">
    <property type="entry name" value="DnaA_homol_Hda"/>
    <property type="match status" value="1"/>
</dbReference>
<dbReference type="NCBIfam" id="NF005982">
    <property type="entry name" value="PRK08084.1"/>
    <property type="match status" value="1"/>
</dbReference>
<dbReference type="PANTHER" id="PTHR30050">
    <property type="entry name" value="CHROMOSOMAL REPLICATION INITIATOR PROTEIN DNAA"/>
    <property type="match status" value="1"/>
</dbReference>
<dbReference type="PANTHER" id="PTHR30050:SF5">
    <property type="entry name" value="DNAA REGULATORY INACTIVATOR HDA"/>
    <property type="match status" value="1"/>
</dbReference>
<dbReference type="Pfam" id="PF00308">
    <property type="entry name" value="Bac_DnaA"/>
    <property type="match status" value="1"/>
</dbReference>
<dbReference type="Pfam" id="PF22688">
    <property type="entry name" value="Hda_lid"/>
    <property type="match status" value="1"/>
</dbReference>
<dbReference type="PRINTS" id="PR00051">
    <property type="entry name" value="DNAA"/>
</dbReference>
<dbReference type="SUPFAM" id="SSF52540">
    <property type="entry name" value="P-loop containing nucleoside triphosphate hydrolases"/>
    <property type="match status" value="1"/>
</dbReference>
<proteinExistence type="inferred from homology"/>
<comment type="function">
    <text evidence="1">Mediates the interaction of DNA replication initiator protein DnaA with DNA polymerase subunit beta sliding clamp (dnaN). Stimulates hydrolysis of ATP-DnaA to ADP-DnaA, rendering DnaA inactive for reinitiation, a process called regulatory inhibition of DnaA or RIDA (By similarity).</text>
</comment>
<comment type="subunit">
    <text evidence="2">The active form seems to be an ADP-bound monomer. Forms the RIDA complex (regulatory inactivation of DnaA) of ATP-DnaA, ADP-Hda and the DNA-loaded beta sliding clamp (dnaN).</text>
</comment>
<comment type="similarity">
    <text evidence="2">Belongs to the DnaA family. HdA subfamily.</text>
</comment>
<gene>
    <name evidence="2" type="primary">hda</name>
    <name type="ordered locus">YpsIP31758_1237</name>
</gene>
<name>HDA_YERP3</name>
<accession>A7FG40</accession>